<name>NUOB_BURM1</name>
<evidence type="ECO:0000250" key="1"/>
<evidence type="ECO:0000255" key="2">
    <source>
        <dbReference type="HAMAP-Rule" id="MF_01356"/>
    </source>
</evidence>
<evidence type="ECO:0000305" key="3"/>
<protein>
    <recommendedName>
        <fullName evidence="2">NADH-quinone oxidoreductase subunit B</fullName>
        <ecNumber evidence="2">7.1.1.-</ecNumber>
    </recommendedName>
    <alternativeName>
        <fullName evidence="2">NADH dehydrogenase I subunit B</fullName>
    </alternativeName>
    <alternativeName>
        <fullName evidence="2">NDH-1 subunit B</fullName>
    </alternativeName>
</protein>
<accession>A9AFY8</accession>
<accession>B3D268</accession>
<proteinExistence type="inferred from homology"/>
<organism>
    <name type="scientific">Burkholderia multivorans (strain ATCC 17616 / 249)</name>
    <dbReference type="NCBI Taxonomy" id="395019"/>
    <lineage>
        <taxon>Bacteria</taxon>
        <taxon>Pseudomonadati</taxon>
        <taxon>Pseudomonadota</taxon>
        <taxon>Betaproteobacteria</taxon>
        <taxon>Burkholderiales</taxon>
        <taxon>Burkholderiaceae</taxon>
        <taxon>Burkholderia</taxon>
        <taxon>Burkholderia cepacia complex</taxon>
    </lineage>
</organism>
<reference key="1">
    <citation type="submission" date="2007-10" db="EMBL/GenBank/DDBJ databases">
        <title>Complete sequence of chromosome 1 of Burkholderia multivorans ATCC 17616.</title>
        <authorList>
            <person name="Copeland A."/>
            <person name="Lucas S."/>
            <person name="Lapidus A."/>
            <person name="Barry K."/>
            <person name="Glavina del Rio T."/>
            <person name="Dalin E."/>
            <person name="Tice H."/>
            <person name="Pitluck S."/>
            <person name="Chain P."/>
            <person name="Malfatti S."/>
            <person name="Shin M."/>
            <person name="Vergez L."/>
            <person name="Schmutz J."/>
            <person name="Larimer F."/>
            <person name="Land M."/>
            <person name="Hauser L."/>
            <person name="Kyrpides N."/>
            <person name="Kim E."/>
            <person name="Tiedje J."/>
            <person name="Richardson P."/>
        </authorList>
    </citation>
    <scope>NUCLEOTIDE SEQUENCE [LARGE SCALE GENOMIC DNA]</scope>
    <source>
        <strain>ATCC 17616 / 249</strain>
    </source>
</reference>
<reference key="2">
    <citation type="submission" date="2007-04" db="EMBL/GenBank/DDBJ databases">
        <title>Complete genome sequence of Burkholderia multivorans ATCC 17616.</title>
        <authorList>
            <person name="Ohtsubo Y."/>
            <person name="Yamashita A."/>
            <person name="Kurokawa K."/>
            <person name="Takami H."/>
            <person name="Yuhara S."/>
            <person name="Nishiyama E."/>
            <person name="Endo R."/>
            <person name="Miyazaki R."/>
            <person name="Ono A."/>
            <person name="Yano K."/>
            <person name="Ito M."/>
            <person name="Sota M."/>
            <person name="Yuji N."/>
            <person name="Hattori M."/>
            <person name="Tsuda M."/>
        </authorList>
    </citation>
    <scope>NUCLEOTIDE SEQUENCE [LARGE SCALE GENOMIC DNA]</scope>
    <source>
        <strain>ATCC 17616 / 249</strain>
    </source>
</reference>
<gene>
    <name evidence="2" type="primary">nuoB</name>
    <name type="ordered locus">Bmul_1029</name>
    <name type="ordered locus">BMULJ_02234</name>
</gene>
<comment type="function">
    <text evidence="1">NDH-1 shuttles electrons from NADH, via FMN and iron-sulfur (Fe-S) centers, to quinones in the respiratory chain. Couples the redox reaction to proton translocation (for every two electrons transferred, four hydrogen ions are translocated across the cytoplasmic membrane), and thus conserves the redox energy in a proton gradient (By similarity).</text>
</comment>
<comment type="catalytic activity">
    <reaction evidence="2">
        <text>a quinone + NADH + 5 H(+)(in) = a quinol + NAD(+) + 4 H(+)(out)</text>
        <dbReference type="Rhea" id="RHEA:57888"/>
        <dbReference type="ChEBI" id="CHEBI:15378"/>
        <dbReference type="ChEBI" id="CHEBI:24646"/>
        <dbReference type="ChEBI" id="CHEBI:57540"/>
        <dbReference type="ChEBI" id="CHEBI:57945"/>
        <dbReference type="ChEBI" id="CHEBI:132124"/>
    </reaction>
</comment>
<comment type="cofactor">
    <cofactor evidence="2">
        <name>[4Fe-4S] cluster</name>
        <dbReference type="ChEBI" id="CHEBI:49883"/>
    </cofactor>
    <text evidence="2">Binds 1 [4Fe-4S] cluster.</text>
</comment>
<comment type="subunit">
    <text evidence="2">NDH-1 is composed of 14 different subunits. Subunits NuoB, C, D, E, F, and G constitute the peripheral sector of the complex.</text>
</comment>
<comment type="subcellular location">
    <subcellularLocation>
        <location evidence="2">Cell inner membrane</location>
        <topology evidence="2">Peripheral membrane protein</topology>
        <orientation evidence="2">Cytoplasmic side</orientation>
    </subcellularLocation>
</comment>
<comment type="similarity">
    <text evidence="2">Belongs to the complex I 20 kDa subunit family.</text>
</comment>
<comment type="sequence caution" evidence="3">
    <conflict type="erroneous initiation">
        <sequence resource="EMBL-CDS" id="ABX14720"/>
    </conflict>
</comment>
<keyword id="KW-0004">4Fe-4S</keyword>
<keyword id="KW-0997">Cell inner membrane</keyword>
<keyword id="KW-1003">Cell membrane</keyword>
<keyword id="KW-0408">Iron</keyword>
<keyword id="KW-0411">Iron-sulfur</keyword>
<keyword id="KW-0472">Membrane</keyword>
<keyword id="KW-0479">Metal-binding</keyword>
<keyword id="KW-0520">NAD</keyword>
<keyword id="KW-0874">Quinone</keyword>
<keyword id="KW-1185">Reference proteome</keyword>
<keyword id="KW-1278">Translocase</keyword>
<keyword id="KW-0813">Transport</keyword>
<keyword id="KW-0830">Ubiquinone</keyword>
<feature type="chain" id="PRO_0000358377" description="NADH-quinone oxidoreductase subunit B">
    <location>
        <begin position="1"/>
        <end position="159"/>
    </location>
</feature>
<feature type="binding site" evidence="2">
    <location>
        <position position="37"/>
    </location>
    <ligand>
        <name>[4Fe-4S] cluster</name>
        <dbReference type="ChEBI" id="CHEBI:49883"/>
    </ligand>
</feature>
<feature type="binding site" evidence="2">
    <location>
        <position position="38"/>
    </location>
    <ligand>
        <name>[4Fe-4S] cluster</name>
        <dbReference type="ChEBI" id="CHEBI:49883"/>
    </ligand>
</feature>
<feature type="binding site" evidence="2">
    <location>
        <position position="102"/>
    </location>
    <ligand>
        <name>[4Fe-4S] cluster</name>
        <dbReference type="ChEBI" id="CHEBI:49883"/>
    </ligand>
</feature>
<feature type="binding site" evidence="2">
    <location>
        <position position="132"/>
    </location>
    <ligand>
        <name>[4Fe-4S] cluster</name>
        <dbReference type="ChEBI" id="CHEBI:49883"/>
    </ligand>
</feature>
<dbReference type="EC" id="7.1.1.-" evidence="2"/>
<dbReference type="EMBL" id="CP000868">
    <property type="protein sequence ID" value="ABX14720.1"/>
    <property type="status" value="ALT_INIT"/>
    <property type="molecule type" value="Genomic_DNA"/>
</dbReference>
<dbReference type="EMBL" id="AP009385">
    <property type="protein sequence ID" value="BAG44130.1"/>
    <property type="molecule type" value="Genomic_DNA"/>
</dbReference>
<dbReference type="RefSeq" id="WP_006398799.1">
    <property type="nucleotide sequence ID" value="NC_010804.1"/>
</dbReference>
<dbReference type="SMR" id="A9AFY8"/>
<dbReference type="STRING" id="395019.BMULJ_02234"/>
<dbReference type="KEGG" id="bmj:BMULJ_02234"/>
<dbReference type="KEGG" id="bmu:Bmul_1029"/>
<dbReference type="eggNOG" id="COG0377">
    <property type="taxonomic scope" value="Bacteria"/>
</dbReference>
<dbReference type="HOGENOM" id="CLU_055737_7_3_4"/>
<dbReference type="Proteomes" id="UP000008815">
    <property type="component" value="Chromosome 1"/>
</dbReference>
<dbReference type="GO" id="GO:0005886">
    <property type="term" value="C:plasma membrane"/>
    <property type="evidence" value="ECO:0007669"/>
    <property type="project" value="UniProtKB-SubCell"/>
</dbReference>
<dbReference type="GO" id="GO:0045271">
    <property type="term" value="C:respiratory chain complex I"/>
    <property type="evidence" value="ECO:0007669"/>
    <property type="project" value="TreeGrafter"/>
</dbReference>
<dbReference type="GO" id="GO:0051539">
    <property type="term" value="F:4 iron, 4 sulfur cluster binding"/>
    <property type="evidence" value="ECO:0007669"/>
    <property type="project" value="UniProtKB-KW"/>
</dbReference>
<dbReference type="GO" id="GO:0005506">
    <property type="term" value="F:iron ion binding"/>
    <property type="evidence" value="ECO:0007669"/>
    <property type="project" value="UniProtKB-UniRule"/>
</dbReference>
<dbReference type="GO" id="GO:0008137">
    <property type="term" value="F:NADH dehydrogenase (ubiquinone) activity"/>
    <property type="evidence" value="ECO:0007669"/>
    <property type="project" value="InterPro"/>
</dbReference>
<dbReference type="GO" id="GO:0050136">
    <property type="term" value="F:NADH:ubiquinone reductase (non-electrogenic) activity"/>
    <property type="evidence" value="ECO:0007669"/>
    <property type="project" value="UniProtKB-UniRule"/>
</dbReference>
<dbReference type="GO" id="GO:0048038">
    <property type="term" value="F:quinone binding"/>
    <property type="evidence" value="ECO:0007669"/>
    <property type="project" value="UniProtKB-KW"/>
</dbReference>
<dbReference type="GO" id="GO:0009060">
    <property type="term" value="P:aerobic respiration"/>
    <property type="evidence" value="ECO:0007669"/>
    <property type="project" value="TreeGrafter"/>
</dbReference>
<dbReference type="GO" id="GO:0015990">
    <property type="term" value="P:electron transport coupled proton transport"/>
    <property type="evidence" value="ECO:0007669"/>
    <property type="project" value="TreeGrafter"/>
</dbReference>
<dbReference type="FunFam" id="3.40.50.12280:FF:000001">
    <property type="entry name" value="NADH-quinone oxidoreductase subunit B 2"/>
    <property type="match status" value="1"/>
</dbReference>
<dbReference type="Gene3D" id="3.40.50.12280">
    <property type="match status" value="1"/>
</dbReference>
<dbReference type="HAMAP" id="MF_01356">
    <property type="entry name" value="NDH1_NuoB"/>
    <property type="match status" value="1"/>
</dbReference>
<dbReference type="InterPro" id="IPR006137">
    <property type="entry name" value="NADH_UbQ_OxRdtase-like_20kDa"/>
</dbReference>
<dbReference type="InterPro" id="IPR006138">
    <property type="entry name" value="NADH_UQ_OxRdtase_20Kd_su"/>
</dbReference>
<dbReference type="NCBIfam" id="TIGR01957">
    <property type="entry name" value="nuoB_fam"/>
    <property type="match status" value="1"/>
</dbReference>
<dbReference type="NCBIfam" id="NF005012">
    <property type="entry name" value="PRK06411.1"/>
    <property type="match status" value="1"/>
</dbReference>
<dbReference type="PANTHER" id="PTHR11995">
    <property type="entry name" value="NADH DEHYDROGENASE"/>
    <property type="match status" value="1"/>
</dbReference>
<dbReference type="PANTHER" id="PTHR11995:SF14">
    <property type="entry name" value="NADH DEHYDROGENASE [UBIQUINONE] IRON-SULFUR PROTEIN 7, MITOCHONDRIAL"/>
    <property type="match status" value="1"/>
</dbReference>
<dbReference type="Pfam" id="PF01058">
    <property type="entry name" value="Oxidored_q6"/>
    <property type="match status" value="1"/>
</dbReference>
<dbReference type="SUPFAM" id="SSF56770">
    <property type="entry name" value="HydA/Nqo6-like"/>
    <property type="match status" value="1"/>
</dbReference>
<dbReference type="PROSITE" id="PS01150">
    <property type="entry name" value="COMPLEX1_20K"/>
    <property type="match status" value="1"/>
</dbReference>
<sequence length="159" mass="17560">MSIEGVLKEGFVTTTADKLINWTRTGSLWPMTFGLACCAVEMMHAGAARYDLDRFGVVFRPSPRQSDVMIVAGTLCNKMAPALRRVYDQMAEPRWVISMGSCANGGGYYHYSYSVVRGCDRIVPVDVYVPGCPPTAEALVYGVIQLQAKIRRTNTIARQ</sequence>